<organism>
    <name type="scientific">Meyerozyma guilliermondii (strain ATCC 6260 / CBS 566 / DSM 6381 / JCM 1539 / NBRC 10279 / NRRL Y-324)</name>
    <name type="common">Yeast</name>
    <name type="synonym">Candida guilliermondii</name>
    <dbReference type="NCBI Taxonomy" id="294746"/>
    <lineage>
        <taxon>Eukaryota</taxon>
        <taxon>Fungi</taxon>
        <taxon>Dikarya</taxon>
        <taxon>Ascomycota</taxon>
        <taxon>Saccharomycotina</taxon>
        <taxon>Pichiomycetes</taxon>
        <taxon>Debaryomycetaceae</taxon>
        <taxon>Meyerozyma</taxon>
    </lineage>
</organism>
<dbReference type="EMBL" id="CH408156">
    <property type="protein sequence ID" value="EDK38160.1"/>
    <property type="molecule type" value="Genomic_DNA"/>
</dbReference>
<dbReference type="RefSeq" id="XP_001486587.1">
    <property type="nucleotide sequence ID" value="XM_001486537.1"/>
</dbReference>
<dbReference type="SMR" id="A5DG57"/>
<dbReference type="STRING" id="294746.A5DG57"/>
<dbReference type="GeneID" id="5128516"/>
<dbReference type="KEGG" id="pgu:PGUG_02258"/>
<dbReference type="VEuPathDB" id="FungiDB:PGUG_02258"/>
<dbReference type="eggNOG" id="KOG1745">
    <property type="taxonomic scope" value="Eukaryota"/>
</dbReference>
<dbReference type="HOGENOM" id="CLU_078295_4_0_1"/>
<dbReference type="InParanoid" id="A5DG57"/>
<dbReference type="OMA" id="THRFKPG"/>
<dbReference type="OrthoDB" id="5326060at2759"/>
<dbReference type="Proteomes" id="UP000001997">
    <property type="component" value="Unassembled WGS sequence"/>
</dbReference>
<dbReference type="GO" id="GO:0000786">
    <property type="term" value="C:nucleosome"/>
    <property type="evidence" value="ECO:0007669"/>
    <property type="project" value="UniProtKB-KW"/>
</dbReference>
<dbReference type="GO" id="GO:0005634">
    <property type="term" value="C:nucleus"/>
    <property type="evidence" value="ECO:0007669"/>
    <property type="project" value="UniProtKB-SubCell"/>
</dbReference>
<dbReference type="GO" id="GO:0003677">
    <property type="term" value="F:DNA binding"/>
    <property type="evidence" value="ECO:0007669"/>
    <property type="project" value="UniProtKB-KW"/>
</dbReference>
<dbReference type="GO" id="GO:0046982">
    <property type="term" value="F:protein heterodimerization activity"/>
    <property type="evidence" value="ECO:0007669"/>
    <property type="project" value="InterPro"/>
</dbReference>
<dbReference type="GO" id="GO:0030527">
    <property type="term" value="F:structural constituent of chromatin"/>
    <property type="evidence" value="ECO:0007669"/>
    <property type="project" value="InterPro"/>
</dbReference>
<dbReference type="CDD" id="cd22911">
    <property type="entry name" value="HFD_H3"/>
    <property type="match status" value="1"/>
</dbReference>
<dbReference type="FunFam" id="1.10.20.10:FF:000010">
    <property type="entry name" value="Histone H3"/>
    <property type="match status" value="1"/>
</dbReference>
<dbReference type="Gene3D" id="1.10.20.10">
    <property type="entry name" value="Histone, subunit A"/>
    <property type="match status" value="1"/>
</dbReference>
<dbReference type="InterPro" id="IPR009072">
    <property type="entry name" value="Histone-fold"/>
</dbReference>
<dbReference type="InterPro" id="IPR007125">
    <property type="entry name" value="Histone_H2A/H2B/H3"/>
</dbReference>
<dbReference type="InterPro" id="IPR000164">
    <property type="entry name" value="Histone_H3/CENP-A"/>
</dbReference>
<dbReference type="PANTHER" id="PTHR11426">
    <property type="entry name" value="HISTONE H3"/>
    <property type="match status" value="1"/>
</dbReference>
<dbReference type="Pfam" id="PF00125">
    <property type="entry name" value="Histone"/>
    <property type="match status" value="1"/>
</dbReference>
<dbReference type="PRINTS" id="PR00622">
    <property type="entry name" value="HISTONEH3"/>
</dbReference>
<dbReference type="SMART" id="SM00428">
    <property type="entry name" value="H3"/>
    <property type="match status" value="1"/>
</dbReference>
<dbReference type="SUPFAM" id="SSF47113">
    <property type="entry name" value="Histone-fold"/>
    <property type="match status" value="1"/>
</dbReference>
<dbReference type="PROSITE" id="PS00322">
    <property type="entry name" value="HISTONE_H3_1"/>
    <property type="match status" value="1"/>
</dbReference>
<dbReference type="PROSITE" id="PS00959">
    <property type="entry name" value="HISTONE_H3_2"/>
    <property type="match status" value="1"/>
</dbReference>
<protein>
    <recommendedName>
        <fullName>Histone H3.3</fullName>
    </recommendedName>
</protein>
<comment type="function">
    <text>Core component of nucleosome. Nucleosomes wrap and compact DNA into chromatin, limiting DNA accessibility to the cellular machineries which require DNA as a template. Histones thereby play a central role in transcription regulation, DNA repair, DNA replication and chromosomal stability. DNA accessibility is regulated via a complex set of post-translational modifications of histones, also called histone code, and nucleosome remodeling.</text>
</comment>
<comment type="subunit">
    <text>The nucleosome is a histone octamer containing two molecules each of H2A, H2B, H3 and H4 assembled in one H3-H4 heterotetramer and two H2A-H2B heterodimers. The octamer wraps approximately 147 bp of DNA.</text>
</comment>
<comment type="subcellular location">
    <subcellularLocation>
        <location evidence="1">Nucleus</location>
    </subcellularLocation>
    <subcellularLocation>
        <location evidence="1">Chromosome</location>
    </subcellularLocation>
</comment>
<comment type="PTM">
    <text evidence="1">Phosphorylated to form H3S10ph. H3S10ph promotes subsequent H3K14ac formation and is required for transcriptional activation through TBP recruitment to the promoters (By similarity).</text>
</comment>
<comment type="PTM">
    <text evidence="1">Mono-, di- and trimethylated by the COMPASS complex to form H3K4me1/2/3. H3K4me activates gene expression by regulating transcription elongation and plays a role in telomere length maintenance. H3K4me enrichment correlates with transcription levels, and occurs in a 5' to 3' gradient with H3K4me3 enrichment at the 5'-end of genes, shifting to H3K4me2 and then H3K4me1. Methylated by SET2 to form H3K36me. H3K36me represses gene expression. Methylated by DOT1 to form H3K79me. H3K79me is required for association of SIR proteins with telomeric regions and for telomeric silencing. The COMPASS-mediated formation of H3K4me2/3 and the DOT1-mediated formation of H3K79me require H2BK123ub1 (By similarity).</text>
</comment>
<comment type="PTM">
    <text evidence="1">Acetylation of histone H3 leads to transcriptional activation. H3K14ac formation by GCN5 is promoted by H3S10ph. H3K14ac can also be formed by ESA1. H3K56ac formation occurs predominantly in newly synthesized H3 molecules during G1, S and G2/M of the cell cycle and may be involved in DNA repair (By similarity).</text>
</comment>
<comment type="similarity">
    <text evidence="3">Belongs to the histone H3 family.</text>
</comment>
<comment type="caution">
    <text evidence="3">To ensure consistency between histone entries, we follow the 'Brno' nomenclature for histone modifications, with positions referring to those used in the literature for the 'closest' model organism. Due to slight variations in histone sequences between organisms and to the presence of initiator methionine in UniProtKB/Swiss-Prot sequences, the actual positions of modified amino acids in the sequence generally differ. In this entry the following conventions are used: H3K4me1/2/3 = mono-, di- and trimethylated Lys-5; H3K9ac = acetylated Lys-10; H3K9me1 = monomethylated Lys-10; H3S10ph = phosphorylated Ser-11; H3K14ac = acetylated Lys-15; H3K14me2 = dimethylated Lys-15; H3K18ac = acetylated Lys-19; H3K18me1 = monomethylated Lys-19; H3K23ac = acetylated Lys-24; H3K23me1 = monomethylated Lys-24; H3K27ac = acetylated Lys-28; H3K27me1/2/3 = mono-, di- and trimethylated Lys-28; H3K36ac = acetylated Lys-37; H3K36me1/2/3 = mono-, di- and trimethylated Lys-37; H3K56ac = acetylated Lys-57; H3K64ac = acetylated Lys-65; H3K79me1/2/3 = mono-, di- and trimethylated Lys-80.</text>
</comment>
<feature type="initiator methionine" description="Removed" evidence="1">
    <location>
        <position position="1"/>
    </location>
</feature>
<feature type="chain" id="PRO_0000297752" description="Histone H3.3">
    <location>
        <begin position="2"/>
        <end position="136"/>
    </location>
</feature>
<feature type="region of interest" description="Disordered" evidence="2">
    <location>
        <begin position="1"/>
        <end position="41"/>
    </location>
</feature>
<feature type="modified residue" description="N6,N6,N6-trimethyllysine; alternate" evidence="1">
    <location>
        <position position="5"/>
    </location>
</feature>
<feature type="modified residue" description="N6,N6-dimethyllysine; alternate" evidence="1">
    <location>
        <position position="5"/>
    </location>
</feature>
<feature type="modified residue" description="N6-methyllysine; alternate" evidence="1">
    <location>
        <position position="5"/>
    </location>
</feature>
<feature type="modified residue" description="N6-acetyllysine; alternate" evidence="1">
    <location>
        <position position="10"/>
    </location>
</feature>
<feature type="modified residue" description="N6-methyllysine; alternate" evidence="1">
    <location>
        <position position="10"/>
    </location>
</feature>
<feature type="modified residue" description="Phosphoserine" evidence="1">
    <location>
        <position position="11"/>
    </location>
</feature>
<feature type="modified residue" description="N6,N6-dimethyllysine; alternate" evidence="1">
    <location>
        <position position="15"/>
    </location>
</feature>
<feature type="modified residue" description="N6-acetyllysine; alternate" evidence="1">
    <location>
        <position position="15"/>
    </location>
</feature>
<feature type="modified residue" description="N6-acetyllysine; alternate" evidence="1">
    <location>
        <position position="19"/>
    </location>
</feature>
<feature type="modified residue" description="N6-methyllysine; alternate" evidence="1">
    <location>
        <position position="19"/>
    </location>
</feature>
<feature type="modified residue" description="N6-acetyllysine; alternate" evidence="1">
    <location>
        <position position="24"/>
    </location>
</feature>
<feature type="modified residue" description="N6-methyllysine; alternate" evidence="1">
    <location>
        <position position="24"/>
    </location>
</feature>
<feature type="modified residue" description="N6,N6,N6-trimethyllysine; alternate" evidence="1">
    <location>
        <position position="28"/>
    </location>
</feature>
<feature type="modified residue" description="N6,N6-dimethyllysine; alternate" evidence="1">
    <location>
        <position position="28"/>
    </location>
</feature>
<feature type="modified residue" description="N6-acetyllysine; alternate" evidence="1">
    <location>
        <position position="28"/>
    </location>
</feature>
<feature type="modified residue" description="N6-methyllysine; alternate" evidence="1">
    <location>
        <position position="28"/>
    </location>
</feature>
<feature type="modified residue" description="N6,N6,N6-trimethyllysine; alternate" evidence="1">
    <location>
        <position position="37"/>
    </location>
</feature>
<feature type="modified residue" description="N6,N6-dimethyllysine; alternate" evidence="1">
    <location>
        <position position="37"/>
    </location>
</feature>
<feature type="modified residue" description="N6-acetyllysine; alternate" evidence="1">
    <location>
        <position position="37"/>
    </location>
</feature>
<feature type="modified residue" description="N6-methyllysine; alternate" evidence="1">
    <location>
        <position position="37"/>
    </location>
</feature>
<feature type="modified residue" description="N6-acetyllysine" evidence="1">
    <location>
        <position position="57"/>
    </location>
</feature>
<feature type="modified residue" description="N6-acetyllysine" evidence="1">
    <location>
        <position position="65"/>
    </location>
</feature>
<feature type="modified residue" description="N6,N6,N6-trimethyllysine; alternate" evidence="1">
    <location>
        <position position="80"/>
    </location>
</feature>
<feature type="modified residue" description="N6,N6-dimethyllysine; alternate" evidence="1">
    <location>
        <position position="80"/>
    </location>
</feature>
<feature type="modified residue" description="N6-methyllysine; alternate" evidence="1">
    <location>
        <position position="80"/>
    </location>
</feature>
<name>H33_PICGU</name>
<reference key="1">
    <citation type="journal article" date="2009" name="Nature">
        <title>Evolution of pathogenicity and sexual reproduction in eight Candida genomes.</title>
        <authorList>
            <person name="Butler G."/>
            <person name="Rasmussen M.D."/>
            <person name="Lin M.F."/>
            <person name="Santos M.A.S."/>
            <person name="Sakthikumar S."/>
            <person name="Munro C.A."/>
            <person name="Rheinbay E."/>
            <person name="Grabherr M."/>
            <person name="Forche A."/>
            <person name="Reedy J.L."/>
            <person name="Agrafioti I."/>
            <person name="Arnaud M.B."/>
            <person name="Bates S."/>
            <person name="Brown A.J.P."/>
            <person name="Brunke S."/>
            <person name="Costanzo M.C."/>
            <person name="Fitzpatrick D.A."/>
            <person name="de Groot P.W.J."/>
            <person name="Harris D."/>
            <person name="Hoyer L.L."/>
            <person name="Hube B."/>
            <person name="Klis F.M."/>
            <person name="Kodira C."/>
            <person name="Lennard N."/>
            <person name="Logue M.E."/>
            <person name="Martin R."/>
            <person name="Neiman A.M."/>
            <person name="Nikolaou E."/>
            <person name="Quail M.A."/>
            <person name="Quinn J."/>
            <person name="Santos M.C."/>
            <person name="Schmitzberger F.F."/>
            <person name="Sherlock G."/>
            <person name="Shah P."/>
            <person name="Silverstein K.A.T."/>
            <person name="Skrzypek M.S."/>
            <person name="Soll D."/>
            <person name="Staggs R."/>
            <person name="Stansfield I."/>
            <person name="Stumpf M.P.H."/>
            <person name="Sudbery P.E."/>
            <person name="Srikantha T."/>
            <person name="Zeng Q."/>
            <person name="Berman J."/>
            <person name="Berriman M."/>
            <person name="Heitman J."/>
            <person name="Gow N.A.R."/>
            <person name="Lorenz M.C."/>
            <person name="Birren B.W."/>
            <person name="Kellis M."/>
            <person name="Cuomo C.A."/>
        </authorList>
    </citation>
    <scope>NUCLEOTIDE SEQUENCE [LARGE SCALE GENOMIC DNA]</scope>
    <source>
        <strain>ATCC 6260 / CBS 566 / DSM 6381 / JCM 1539 / NBRC 10279 / NRRL Y-324</strain>
    </source>
</reference>
<sequence>MARTKQTARKSTGGKAPRKQLASKAARKSAPVTGGVKKPHRYKPGTVALREIRRFQKSTELLIRKLPFQRLVREIAQDFKSDLRFQSSAIGALQEAVEAYLVSLFEDTNLCAIHAKRVTIQKKDIQLARRLRGERS</sequence>
<accession>A5DG57</accession>
<proteinExistence type="inferred from homology"/>
<evidence type="ECO:0000250" key="1"/>
<evidence type="ECO:0000256" key="2">
    <source>
        <dbReference type="SAM" id="MobiDB-lite"/>
    </source>
</evidence>
<evidence type="ECO:0000305" key="3"/>
<gene>
    <name type="primary">HHT3</name>
    <name type="ORF">PGUG_02258</name>
</gene>
<keyword id="KW-0007">Acetylation</keyword>
<keyword id="KW-0158">Chromosome</keyword>
<keyword id="KW-0238">DNA-binding</keyword>
<keyword id="KW-0488">Methylation</keyword>
<keyword id="KW-0544">Nucleosome core</keyword>
<keyword id="KW-0539">Nucleus</keyword>
<keyword id="KW-0597">Phosphoprotein</keyword>
<keyword id="KW-1185">Reference proteome</keyword>